<keyword id="KW-0963">Cytoplasm</keyword>
<keyword id="KW-0671">Queuosine biosynthesis</keyword>
<keyword id="KW-0949">S-adenosyl-L-methionine</keyword>
<keyword id="KW-0808">Transferase</keyword>
<comment type="function">
    <text evidence="1">Transfers and isomerizes the ribose moiety from AdoMet to the 7-aminomethyl group of 7-deazaguanine (preQ1-tRNA) to give epoxyqueuosine (oQ-tRNA).</text>
</comment>
<comment type="catalytic activity">
    <reaction evidence="1">
        <text>7-aminomethyl-7-carbaguanosine(34) in tRNA + S-adenosyl-L-methionine = epoxyqueuosine(34) in tRNA + adenine + L-methionine + 2 H(+)</text>
        <dbReference type="Rhea" id="RHEA:32155"/>
        <dbReference type="Rhea" id="RHEA-COMP:10342"/>
        <dbReference type="Rhea" id="RHEA-COMP:18582"/>
        <dbReference type="ChEBI" id="CHEBI:15378"/>
        <dbReference type="ChEBI" id="CHEBI:16708"/>
        <dbReference type="ChEBI" id="CHEBI:57844"/>
        <dbReference type="ChEBI" id="CHEBI:59789"/>
        <dbReference type="ChEBI" id="CHEBI:82833"/>
        <dbReference type="ChEBI" id="CHEBI:194443"/>
        <dbReference type="EC" id="2.4.99.17"/>
    </reaction>
</comment>
<comment type="pathway">
    <text evidence="1">tRNA modification; tRNA-queuosine biosynthesis.</text>
</comment>
<comment type="subunit">
    <text evidence="1">Monomer.</text>
</comment>
<comment type="subcellular location">
    <subcellularLocation>
        <location evidence="1">Cytoplasm</location>
    </subcellularLocation>
</comment>
<comment type="similarity">
    <text evidence="1">Belongs to the QueA family.</text>
</comment>
<dbReference type="EC" id="2.4.99.17" evidence="1"/>
<dbReference type="EMBL" id="AF232005">
    <property type="protein sequence ID" value="AAF71490.1"/>
    <property type="molecule type" value="Genomic_DNA"/>
</dbReference>
<dbReference type="EMBL" id="CP000075">
    <property type="protein sequence ID" value="AAY36278.1"/>
    <property type="molecule type" value="Genomic_DNA"/>
</dbReference>
<dbReference type="RefSeq" id="WP_011266902.1">
    <property type="nucleotide sequence ID" value="NC_007005.1"/>
</dbReference>
<dbReference type="RefSeq" id="YP_234316.1">
    <property type="nucleotide sequence ID" value="NC_007005.1"/>
</dbReference>
<dbReference type="SMR" id="Q9L6W2"/>
<dbReference type="STRING" id="205918.Psyr_1227"/>
<dbReference type="KEGG" id="psb:Psyr_1227"/>
<dbReference type="PATRIC" id="fig|205918.7.peg.1259"/>
<dbReference type="eggNOG" id="COG0809">
    <property type="taxonomic scope" value="Bacteria"/>
</dbReference>
<dbReference type="HOGENOM" id="CLU_039110_1_0_6"/>
<dbReference type="OrthoDB" id="9805933at2"/>
<dbReference type="UniPathway" id="UPA00392"/>
<dbReference type="Proteomes" id="UP000000426">
    <property type="component" value="Chromosome"/>
</dbReference>
<dbReference type="GO" id="GO:0005737">
    <property type="term" value="C:cytoplasm"/>
    <property type="evidence" value="ECO:0007669"/>
    <property type="project" value="UniProtKB-SubCell"/>
</dbReference>
<dbReference type="GO" id="GO:0051075">
    <property type="term" value="F:S-adenosylmethionine:tRNA ribosyltransferase-isomerase activity"/>
    <property type="evidence" value="ECO:0007669"/>
    <property type="project" value="UniProtKB-EC"/>
</dbReference>
<dbReference type="GO" id="GO:0008616">
    <property type="term" value="P:queuosine biosynthetic process"/>
    <property type="evidence" value="ECO:0007669"/>
    <property type="project" value="UniProtKB-UniRule"/>
</dbReference>
<dbReference type="GO" id="GO:0002099">
    <property type="term" value="P:tRNA wobble guanine modification"/>
    <property type="evidence" value="ECO:0007669"/>
    <property type="project" value="TreeGrafter"/>
</dbReference>
<dbReference type="FunFam" id="2.40.10.240:FF:000001">
    <property type="entry name" value="S-adenosylmethionine:tRNA ribosyltransferase-isomerase"/>
    <property type="match status" value="1"/>
</dbReference>
<dbReference type="FunFam" id="3.40.1780.10:FF:000001">
    <property type="entry name" value="S-adenosylmethionine:tRNA ribosyltransferase-isomerase"/>
    <property type="match status" value="1"/>
</dbReference>
<dbReference type="Gene3D" id="2.40.10.240">
    <property type="entry name" value="QueA-like"/>
    <property type="match status" value="1"/>
</dbReference>
<dbReference type="Gene3D" id="3.40.1780.10">
    <property type="entry name" value="QueA-like"/>
    <property type="match status" value="1"/>
</dbReference>
<dbReference type="HAMAP" id="MF_00113">
    <property type="entry name" value="QueA"/>
    <property type="match status" value="1"/>
</dbReference>
<dbReference type="InterPro" id="IPR003699">
    <property type="entry name" value="QueA"/>
</dbReference>
<dbReference type="InterPro" id="IPR042118">
    <property type="entry name" value="QueA_dom1"/>
</dbReference>
<dbReference type="InterPro" id="IPR042119">
    <property type="entry name" value="QueA_dom2"/>
</dbReference>
<dbReference type="InterPro" id="IPR036100">
    <property type="entry name" value="QueA_sf"/>
</dbReference>
<dbReference type="NCBIfam" id="NF001140">
    <property type="entry name" value="PRK00147.1"/>
    <property type="match status" value="1"/>
</dbReference>
<dbReference type="NCBIfam" id="TIGR00113">
    <property type="entry name" value="queA"/>
    <property type="match status" value="1"/>
</dbReference>
<dbReference type="PANTHER" id="PTHR30307">
    <property type="entry name" value="S-ADENOSYLMETHIONINE:TRNA RIBOSYLTRANSFERASE-ISOMERASE"/>
    <property type="match status" value="1"/>
</dbReference>
<dbReference type="PANTHER" id="PTHR30307:SF0">
    <property type="entry name" value="S-ADENOSYLMETHIONINE:TRNA RIBOSYLTRANSFERASE-ISOMERASE"/>
    <property type="match status" value="1"/>
</dbReference>
<dbReference type="Pfam" id="PF02547">
    <property type="entry name" value="Queuosine_synth"/>
    <property type="match status" value="1"/>
</dbReference>
<dbReference type="SUPFAM" id="SSF111337">
    <property type="entry name" value="QueA-like"/>
    <property type="match status" value="1"/>
</dbReference>
<name>QUEA_PSEU2</name>
<organism>
    <name type="scientific">Pseudomonas syringae pv. syringae (strain B728a)</name>
    <dbReference type="NCBI Taxonomy" id="205918"/>
    <lineage>
        <taxon>Bacteria</taxon>
        <taxon>Pseudomonadati</taxon>
        <taxon>Pseudomonadota</taxon>
        <taxon>Gammaproteobacteria</taxon>
        <taxon>Pseudomonadales</taxon>
        <taxon>Pseudomonadaceae</taxon>
        <taxon>Pseudomonas</taxon>
        <taxon>Pseudomonas syringae</taxon>
    </lineage>
</organism>
<evidence type="ECO:0000255" key="1">
    <source>
        <dbReference type="HAMAP-Rule" id="MF_00113"/>
    </source>
</evidence>
<evidence type="ECO:0000305" key="2"/>
<proteinExistence type="inferred from homology"/>
<protein>
    <recommendedName>
        <fullName evidence="1">S-adenosylmethionine:tRNA ribosyltransferase-isomerase</fullName>
        <ecNumber evidence="1">2.4.99.17</ecNumber>
    </recommendedName>
    <alternativeName>
        <fullName evidence="1">Queuosine biosynthesis protein QueA</fullName>
    </alternativeName>
</protein>
<sequence length="354" mass="38721">MRVADFTFELPDSLIARHPLAERRSSRLLTLDGPTGALAHRQFTDLLEHLRPGDLMVFNNTRVIPARLFGQKASGGKLEILVERVLDSHRVLAHVRSSKSPKPGSSILIDGGGEAEMVARHDALFELRFAEEVLPLLERVGRMPLPPYIDRPDEGADRERYQTVYAQRAGAVAAPTAGLHFDQPLLEAIAAKGVETAFVTLHVGAGTFQPVRVEQIEDHHMHSEWLEVGQDVVDAVAACRARGGRVIAVGTTSVRSLESAARDGELKSFSGDTDIFIYPGRPFHVVDALVTNFHLPESTLLMLVSAFAGYPETMAAYAAAIEHGYRFFSYGDAMFITRNPAPTAPQESAPEDHA</sequence>
<feature type="chain" id="PRO_0000165428" description="S-adenosylmethionine:tRNA ribosyltransferase-isomerase">
    <location>
        <begin position="1"/>
        <end position="354"/>
    </location>
</feature>
<feature type="sequence conflict" description="In Ref. 1; AAF71490." evidence="2" ref="1">
    <original>N</original>
    <variation>T</variation>
    <location>
        <position position="59"/>
    </location>
</feature>
<reference key="1">
    <citation type="journal article" date="2000" name="Proc. Natl. Acad. Sci. U.S.A.">
        <title>The Pseudomonas syringae Hrp pathogenicity island has a tripartite mosaic structure composed of a cluster of type III secretion genes bounded by exchangeable effector and conserved effector loci that contribute to parasitic fitness and pathogenicity in plants.</title>
        <authorList>
            <person name="Alfano J.R."/>
            <person name="Charkowski A.O."/>
            <person name="Deng W.-L."/>
            <person name="Badel J.L."/>
            <person name="Petnicki-Ocwieja T."/>
            <person name="van Dijk K."/>
            <person name="Collmer A."/>
        </authorList>
    </citation>
    <scope>NUCLEOTIDE SEQUENCE [GENOMIC DNA]</scope>
</reference>
<reference key="2">
    <citation type="journal article" date="2005" name="Proc. Natl. Acad. Sci. U.S.A.">
        <title>Comparison of the complete genome sequences of Pseudomonas syringae pv. syringae B728a and pv. tomato DC3000.</title>
        <authorList>
            <person name="Feil H."/>
            <person name="Feil W.S."/>
            <person name="Chain P."/>
            <person name="Larimer F."/>
            <person name="Dibartolo G."/>
            <person name="Copeland A."/>
            <person name="Lykidis A."/>
            <person name="Trong S."/>
            <person name="Nolan M."/>
            <person name="Goltsman E."/>
            <person name="Thiel J."/>
            <person name="Malfatti S."/>
            <person name="Loper J.E."/>
            <person name="Lapidus A."/>
            <person name="Detter J.C."/>
            <person name="Land M."/>
            <person name="Richardson P.M."/>
            <person name="Kyrpides N.C."/>
            <person name="Ivanova N."/>
            <person name="Lindow S.E."/>
        </authorList>
    </citation>
    <scope>NUCLEOTIDE SEQUENCE [LARGE SCALE GENOMIC DNA]</scope>
    <source>
        <strain>B728a</strain>
    </source>
</reference>
<gene>
    <name evidence="1" type="primary">queA</name>
    <name type="ordered locus">Psyr_1227</name>
</gene>
<accession>Q9L6W2</accession>
<accession>Q4ZX44</accession>